<name>MRD1_CRYNJ</name>
<accession>P0CR16</accession>
<accession>Q55WN0</accession>
<accession>Q5KJL5</accession>
<feature type="chain" id="PRO_0000081640" description="Multiple RNA-binding domain-containing protein 1">
    <location>
        <begin position="1"/>
        <end position="747"/>
    </location>
</feature>
<feature type="domain" description="RRM 1" evidence="2">
    <location>
        <begin position="2"/>
        <end position="80"/>
    </location>
</feature>
<feature type="domain" description="RRM 2" evidence="2">
    <location>
        <begin position="199"/>
        <end position="277"/>
    </location>
</feature>
<feature type="domain" description="RRM 3" evidence="2">
    <location>
        <begin position="395"/>
        <end position="467"/>
    </location>
</feature>
<feature type="domain" description="RRM 4" evidence="2">
    <location>
        <begin position="513"/>
        <end position="596"/>
    </location>
</feature>
<feature type="domain" description="RRM 5" evidence="2">
    <location>
        <begin position="618"/>
        <end position="701"/>
    </location>
</feature>
<feature type="region of interest" description="Disordered" evidence="3">
    <location>
        <begin position="83"/>
        <end position="117"/>
    </location>
</feature>
<feature type="region of interest" description="Disordered" evidence="3">
    <location>
        <begin position="129"/>
        <end position="169"/>
    </location>
</feature>
<feature type="region of interest" description="Disordered" evidence="3">
    <location>
        <begin position="595"/>
        <end position="615"/>
    </location>
</feature>
<feature type="region of interest" description="Disordered" evidence="3">
    <location>
        <begin position="718"/>
        <end position="747"/>
    </location>
</feature>
<feature type="compositionally biased region" description="Basic and acidic residues" evidence="3">
    <location>
        <begin position="143"/>
        <end position="156"/>
    </location>
</feature>
<feature type="compositionally biased region" description="Acidic residues" evidence="3">
    <location>
        <begin position="157"/>
        <end position="169"/>
    </location>
</feature>
<feature type="compositionally biased region" description="Basic and acidic residues" evidence="3">
    <location>
        <begin position="597"/>
        <end position="614"/>
    </location>
</feature>
<comment type="function">
    <text evidence="1">Involved in pre-rRNA processing.</text>
</comment>
<comment type="subcellular location">
    <subcellularLocation>
        <location evidence="1">Nucleus</location>
    </subcellularLocation>
</comment>
<comment type="similarity">
    <text evidence="4">Belongs to the RRM MRD1 family.</text>
</comment>
<sequence length="747" mass="81797">MSRLIFLNLPSTLNPDTFRKTLLSPATLKSTTITDTKLVPKRRFAFVGYKDAEEAQKVKEWFDGTYAFGGGKVKVDFVKDEPLKTGDKLNRGEKSKEKRSKEGRDNVQEKQEPNKRLQEFMSVMKGVDPAMASPEASTSTAEGTKKEKSVKGKEKSEEPEEAEADDDDAAWLRRRQAALEGEPSTPQLSADEQLILSTSRLFVRNLAFITTSESLSSHFSTYGRIDECHLPVSQTTGEPLGTAFLQFHNAEDALAAYKALDKTIFQGRLLHVLPGRAKPGQEGAAAGSGVVDGKVLGKRDEGRGEVKSKVDAKRKQESAKGVNWASLYMNSDAVAASVADRMGISKSELLNADSGNSAVKLALAETTVIEETKKYFEEAGIVLESLQPRVPRSQTTILVKNIPYGTSIQSLTDLFAPHGKLTRVLLPPAGTLGVVEFENHMDAGRAFKALAYRRLGNAVLYLEKGPVGMFKSETAPGVGPISTEQKREEEAKALAEKVESLPEQPDPTDEAGSTLFLKGLNFTTTTPHLQTVLSHIPGFSFARVQMKPDPKRPGEKLSMGYGFVGFKTKEAATKALKALEGFEIDGKSLEVKFAQRGAEDDRETKKGGDAEGGKTKSTKVLVKNLPFEATKKDVRELFSAYGQLKSLRLPRKAVPTSTGAQSTRGFAFLEFTTHTEAARAMEALKHTHLLGRHLVLQWANEGEEVDIKGLREKVKGEVRGMEDGGDRKRRKLDFKGGKEDEMDGLEV</sequence>
<proteinExistence type="inferred from homology"/>
<evidence type="ECO:0000250" key="1"/>
<evidence type="ECO:0000255" key="2">
    <source>
        <dbReference type="PROSITE-ProRule" id="PRU00176"/>
    </source>
</evidence>
<evidence type="ECO:0000256" key="3">
    <source>
        <dbReference type="SAM" id="MobiDB-lite"/>
    </source>
</evidence>
<evidence type="ECO:0000305" key="4"/>
<protein>
    <recommendedName>
        <fullName>Multiple RNA-binding domain-containing protein 1</fullName>
    </recommendedName>
</protein>
<keyword id="KW-0539">Nucleus</keyword>
<keyword id="KW-1185">Reference proteome</keyword>
<keyword id="KW-0677">Repeat</keyword>
<keyword id="KW-0687">Ribonucleoprotein</keyword>
<keyword id="KW-0694">RNA-binding</keyword>
<keyword id="KW-0698">rRNA processing</keyword>
<organism>
    <name type="scientific">Cryptococcus neoformans var. neoformans serotype D (strain JEC21 / ATCC MYA-565)</name>
    <name type="common">Filobasidiella neoformans</name>
    <dbReference type="NCBI Taxonomy" id="214684"/>
    <lineage>
        <taxon>Eukaryota</taxon>
        <taxon>Fungi</taxon>
        <taxon>Dikarya</taxon>
        <taxon>Basidiomycota</taxon>
        <taxon>Agaricomycotina</taxon>
        <taxon>Tremellomycetes</taxon>
        <taxon>Tremellales</taxon>
        <taxon>Cryptococcaceae</taxon>
        <taxon>Cryptococcus</taxon>
        <taxon>Cryptococcus neoformans species complex</taxon>
    </lineage>
</organism>
<gene>
    <name type="primary">MRD1</name>
    <name type="ordered locus">CNC06110</name>
</gene>
<reference key="1">
    <citation type="journal article" date="2005" name="Science">
        <title>The genome of the basidiomycetous yeast and human pathogen Cryptococcus neoformans.</title>
        <authorList>
            <person name="Loftus B.J."/>
            <person name="Fung E."/>
            <person name="Roncaglia P."/>
            <person name="Rowley D."/>
            <person name="Amedeo P."/>
            <person name="Bruno D."/>
            <person name="Vamathevan J."/>
            <person name="Miranda M."/>
            <person name="Anderson I.J."/>
            <person name="Fraser J.A."/>
            <person name="Allen J.E."/>
            <person name="Bosdet I.E."/>
            <person name="Brent M.R."/>
            <person name="Chiu R."/>
            <person name="Doering T.L."/>
            <person name="Donlin M.J."/>
            <person name="D'Souza C.A."/>
            <person name="Fox D.S."/>
            <person name="Grinberg V."/>
            <person name="Fu J."/>
            <person name="Fukushima M."/>
            <person name="Haas B.J."/>
            <person name="Huang J.C."/>
            <person name="Janbon G."/>
            <person name="Jones S.J.M."/>
            <person name="Koo H.L."/>
            <person name="Krzywinski M.I."/>
            <person name="Kwon-Chung K.J."/>
            <person name="Lengeler K.B."/>
            <person name="Maiti R."/>
            <person name="Marra M.A."/>
            <person name="Marra R.E."/>
            <person name="Mathewson C.A."/>
            <person name="Mitchell T.G."/>
            <person name="Pertea M."/>
            <person name="Riggs F.R."/>
            <person name="Salzberg S.L."/>
            <person name="Schein J.E."/>
            <person name="Shvartsbeyn A."/>
            <person name="Shin H."/>
            <person name="Shumway M."/>
            <person name="Specht C.A."/>
            <person name="Suh B.B."/>
            <person name="Tenney A."/>
            <person name="Utterback T.R."/>
            <person name="Wickes B.L."/>
            <person name="Wortman J.R."/>
            <person name="Wye N.H."/>
            <person name="Kronstad J.W."/>
            <person name="Lodge J.K."/>
            <person name="Heitman J."/>
            <person name="Davis R.W."/>
            <person name="Fraser C.M."/>
            <person name="Hyman R.W."/>
        </authorList>
    </citation>
    <scope>NUCLEOTIDE SEQUENCE [LARGE SCALE GENOMIC DNA]</scope>
    <source>
        <strain>JEC21 / ATCC MYA-565</strain>
    </source>
</reference>
<dbReference type="EMBL" id="AE017343">
    <property type="protein sequence ID" value="AAW42566.2"/>
    <property type="molecule type" value="Genomic_DNA"/>
</dbReference>
<dbReference type="RefSeq" id="XP_569873.1">
    <property type="nucleotide sequence ID" value="XM_569873.1"/>
</dbReference>
<dbReference type="SMR" id="P0CR16"/>
<dbReference type="FunCoup" id="P0CR16">
    <property type="interactions" value="796"/>
</dbReference>
<dbReference type="STRING" id="214684.P0CR16"/>
<dbReference type="PaxDb" id="214684-P0CR16"/>
<dbReference type="EnsemblFungi" id="AAW42566">
    <property type="protein sequence ID" value="AAW42566"/>
    <property type="gene ID" value="CNC06110"/>
</dbReference>
<dbReference type="eggNOG" id="KOG0110">
    <property type="taxonomic scope" value="Eukaryota"/>
</dbReference>
<dbReference type="HOGENOM" id="CLU_008479_0_0_1"/>
<dbReference type="InParanoid" id="P0CR16"/>
<dbReference type="Proteomes" id="UP000002149">
    <property type="component" value="Chromosome 3"/>
</dbReference>
<dbReference type="GO" id="GO:0016607">
    <property type="term" value="C:nuclear speck"/>
    <property type="evidence" value="ECO:0000318"/>
    <property type="project" value="GO_Central"/>
</dbReference>
<dbReference type="GO" id="GO:0005730">
    <property type="term" value="C:nucleolus"/>
    <property type="evidence" value="ECO:0000318"/>
    <property type="project" value="GO_Central"/>
</dbReference>
<dbReference type="GO" id="GO:1990904">
    <property type="term" value="C:ribonucleoprotein complex"/>
    <property type="evidence" value="ECO:0007669"/>
    <property type="project" value="UniProtKB-KW"/>
</dbReference>
<dbReference type="GO" id="GO:0003723">
    <property type="term" value="F:RNA binding"/>
    <property type="evidence" value="ECO:0000318"/>
    <property type="project" value="GO_Central"/>
</dbReference>
<dbReference type="GO" id="GO:0006364">
    <property type="term" value="P:rRNA processing"/>
    <property type="evidence" value="ECO:0007669"/>
    <property type="project" value="UniProtKB-KW"/>
</dbReference>
<dbReference type="CDD" id="cd12568">
    <property type="entry name" value="RRM3_MRD1"/>
    <property type="match status" value="1"/>
</dbReference>
<dbReference type="CDD" id="cd12320">
    <property type="entry name" value="RRM6_RBM19_RRM5_MRD1"/>
    <property type="match status" value="1"/>
</dbReference>
<dbReference type="FunFam" id="3.30.70.330:FF:000942">
    <property type="entry name" value="Multiple RNA-binding domain-containing protein 1"/>
    <property type="match status" value="1"/>
</dbReference>
<dbReference type="FunFam" id="3.30.70.330:FF:001003">
    <property type="entry name" value="Multiple RNA-binding domain-containing protein 1"/>
    <property type="match status" value="1"/>
</dbReference>
<dbReference type="FunFam" id="3.30.70.330:FF:001387">
    <property type="entry name" value="Multiple RNA-binding domain-containing protein 1"/>
    <property type="match status" value="1"/>
</dbReference>
<dbReference type="FunFam" id="3.30.70.330:FF:000277">
    <property type="entry name" value="RNA binding motif protein 19"/>
    <property type="match status" value="1"/>
</dbReference>
<dbReference type="Gene3D" id="3.30.70.330">
    <property type="match status" value="5"/>
</dbReference>
<dbReference type="InterPro" id="IPR034482">
    <property type="entry name" value="Mrd1_RRM3"/>
</dbReference>
<dbReference type="InterPro" id="IPR012677">
    <property type="entry name" value="Nucleotide-bd_a/b_plait_sf"/>
</dbReference>
<dbReference type="InterPro" id="IPR035979">
    <property type="entry name" value="RBD_domain_sf"/>
</dbReference>
<dbReference type="InterPro" id="IPR000504">
    <property type="entry name" value="RRM_dom"/>
</dbReference>
<dbReference type="InterPro" id="IPR051945">
    <property type="entry name" value="RRM_MRD1_RNA_proc_ribogen"/>
</dbReference>
<dbReference type="PANTHER" id="PTHR48039">
    <property type="entry name" value="RNA-BINDING MOTIF PROTEIN 14B"/>
    <property type="match status" value="1"/>
</dbReference>
<dbReference type="PANTHER" id="PTHR48039:SF5">
    <property type="entry name" value="RNA-BINDING PROTEIN 28"/>
    <property type="match status" value="1"/>
</dbReference>
<dbReference type="Pfam" id="PF00076">
    <property type="entry name" value="RRM_1"/>
    <property type="match status" value="4"/>
</dbReference>
<dbReference type="SMART" id="SM00360">
    <property type="entry name" value="RRM"/>
    <property type="match status" value="5"/>
</dbReference>
<dbReference type="SUPFAM" id="SSF54928">
    <property type="entry name" value="RNA-binding domain, RBD"/>
    <property type="match status" value="4"/>
</dbReference>
<dbReference type="PROSITE" id="PS50102">
    <property type="entry name" value="RRM"/>
    <property type="match status" value="5"/>
</dbReference>